<name>PELA_ASPTN</name>
<organism>
    <name type="scientific">Aspergillus terreus (strain NIH 2624 / FGSC A1156)</name>
    <dbReference type="NCBI Taxonomy" id="341663"/>
    <lineage>
        <taxon>Eukaryota</taxon>
        <taxon>Fungi</taxon>
        <taxon>Dikarya</taxon>
        <taxon>Ascomycota</taxon>
        <taxon>Pezizomycotina</taxon>
        <taxon>Eurotiomycetes</taxon>
        <taxon>Eurotiomycetidae</taxon>
        <taxon>Eurotiales</taxon>
        <taxon>Aspergillaceae</taxon>
        <taxon>Aspergillus</taxon>
        <taxon>Aspergillus subgen. Circumdati</taxon>
    </lineage>
</organism>
<proteinExistence type="inferred from homology"/>
<keyword id="KW-0119">Carbohydrate metabolism</keyword>
<keyword id="KW-0961">Cell wall biogenesis/degradation</keyword>
<keyword id="KW-1015">Disulfide bond</keyword>
<keyword id="KW-0456">Lyase</keyword>
<keyword id="KW-0624">Polysaccharide degradation</keyword>
<keyword id="KW-1185">Reference proteome</keyword>
<keyword id="KW-0964">Secreted</keyword>
<keyword id="KW-0732">Signal</keyword>
<sequence>MKFPAFITAIISIASLSSAISVSGAAEGFAKGVTGGGSATPVYPSTISELVSYLKDSQPRVVVLTKTFDFRGSEGTTTGTGCAPWGTASNCQLAINKDNWCTNYQPNAPSASVSYDNAGVLGITITSDKTLIGQGSSGVIKGKGIRIVSGAKNVIIQNIAITDINPKYVWGGDAITLNNCDMVWIDHVTTARIGRQHLVLGTSASNRVTVSNSYFNGVSDYSATCNGYHYWGIYFAGSNDMVTLKGNYIYHMSGRSPKVQSNTLLHAVNNYWYDISGHAFEIGAGGYVLAEGNVFQNVPTILEEDDGQLFTSPNSNTNQVCSTYLGHVCQVNGFGSSGTFSSADTGFLVNFQGKNVASASAYTVAQSSVPSNAGQGKL</sequence>
<dbReference type="EC" id="4.2.2.10"/>
<dbReference type="EMBL" id="CH476595">
    <property type="protein sequence ID" value="EAU37973.1"/>
    <property type="molecule type" value="Genomic_DNA"/>
</dbReference>
<dbReference type="RefSeq" id="XP_001208581.1">
    <property type="nucleotide sequence ID" value="XM_001208581.1"/>
</dbReference>
<dbReference type="SMR" id="Q0CYL8"/>
<dbReference type="STRING" id="341663.Q0CYL8"/>
<dbReference type="EnsemblFungi" id="EAU37973">
    <property type="protein sequence ID" value="EAU37973"/>
    <property type="gene ID" value="ATEG_01216"/>
</dbReference>
<dbReference type="GeneID" id="4315566"/>
<dbReference type="VEuPathDB" id="FungiDB:ATEG_01216"/>
<dbReference type="eggNOG" id="ENOG502QXM6">
    <property type="taxonomic scope" value="Eukaryota"/>
</dbReference>
<dbReference type="HOGENOM" id="CLU_021980_0_1_1"/>
<dbReference type="OMA" id="YLGHVCQ"/>
<dbReference type="OrthoDB" id="1637350at2759"/>
<dbReference type="Proteomes" id="UP000007963">
    <property type="component" value="Unassembled WGS sequence"/>
</dbReference>
<dbReference type="GO" id="GO:0005576">
    <property type="term" value="C:extracellular region"/>
    <property type="evidence" value="ECO:0007669"/>
    <property type="project" value="UniProtKB-SubCell"/>
</dbReference>
<dbReference type="GO" id="GO:0030570">
    <property type="term" value="F:pectate lyase activity"/>
    <property type="evidence" value="ECO:0007669"/>
    <property type="project" value="InterPro"/>
</dbReference>
<dbReference type="GO" id="GO:0047490">
    <property type="term" value="F:pectin lyase activity"/>
    <property type="evidence" value="ECO:0000250"/>
    <property type="project" value="UniProtKB"/>
</dbReference>
<dbReference type="GO" id="GO:0071555">
    <property type="term" value="P:cell wall organization"/>
    <property type="evidence" value="ECO:0007669"/>
    <property type="project" value="UniProtKB-KW"/>
</dbReference>
<dbReference type="GO" id="GO:0045490">
    <property type="term" value="P:pectin catabolic process"/>
    <property type="evidence" value="ECO:0000250"/>
    <property type="project" value="UniProtKB"/>
</dbReference>
<dbReference type="FunFam" id="2.160.20.10:FF:000003">
    <property type="entry name" value="Pectin lyase F"/>
    <property type="match status" value="1"/>
</dbReference>
<dbReference type="Gene3D" id="2.160.20.10">
    <property type="entry name" value="Single-stranded right-handed beta-helix, Pectin lyase-like"/>
    <property type="match status" value="1"/>
</dbReference>
<dbReference type="InterPro" id="IPR002022">
    <property type="entry name" value="Pec_lyase"/>
</dbReference>
<dbReference type="InterPro" id="IPR012334">
    <property type="entry name" value="Pectin_lyas_fold"/>
</dbReference>
<dbReference type="InterPro" id="IPR011050">
    <property type="entry name" value="Pectin_lyase_fold/virulence"/>
</dbReference>
<dbReference type="InterPro" id="IPR045032">
    <property type="entry name" value="PEL"/>
</dbReference>
<dbReference type="PANTHER" id="PTHR31683">
    <property type="entry name" value="PECTATE LYASE 18-RELATED"/>
    <property type="match status" value="1"/>
</dbReference>
<dbReference type="PANTHER" id="PTHR31683:SF16">
    <property type="entry name" value="PECTIN LYASE A-RELATED"/>
    <property type="match status" value="1"/>
</dbReference>
<dbReference type="Pfam" id="PF00544">
    <property type="entry name" value="Pectate_lyase_4"/>
    <property type="match status" value="1"/>
</dbReference>
<dbReference type="SMART" id="SM00656">
    <property type="entry name" value="Amb_all"/>
    <property type="match status" value="1"/>
</dbReference>
<dbReference type="SUPFAM" id="SSF51126">
    <property type="entry name" value="Pectin lyase-like"/>
    <property type="match status" value="1"/>
</dbReference>
<accession>Q0CYL8</accession>
<comment type="function">
    <text evidence="1">Pectinolytic enzymes consist of four classes of enzymes: pectin lyase, polygalacturonase, pectin methylesterase and rhamnogalacturonase. Among pectinolytic enzymes, pectin lyase is the most important in depolymerization of pectin, since it cleaves internal glycosidic bonds of highly methylated pectins (By similarity).</text>
</comment>
<comment type="catalytic activity">
    <reaction>
        <text>Eliminative cleavage of (1-&gt;4)-alpha-D-galacturonan methyl ester to give oligosaccharides with 4-deoxy-6-O-methyl-alpha-D-galact-4-enuronosyl groups at their non-reducing ends.</text>
        <dbReference type="EC" id="4.2.2.10"/>
    </reaction>
</comment>
<comment type="subcellular location">
    <subcellularLocation>
        <location evidence="1">Secreted</location>
    </subcellularLocation>
</comment>
<comment type="similarity">
    <text evidence="3">Belongs to the polysaccharide lyase 1 family.</text>
</comment>
<feature type="signal peptide" evidence="2">
    <location>
        <begin position="1"/>
        <end position="19"/>
    </location>
</feature>
<feature type="chain" id="PRO_0000394342" description="Probable pectin lyase A">
    <location>
        <begin position="20"/>
        <end position="378"/>
    </location>
</feature>
<feature type="active site" evidence="2">
    <location>
        <position position="255"/>
    </location>
</feature>
<feature type="disulfide bond" evidence="1">
    <location>
        <begin position="82"/>
        <end position="101"/>
    </location>
</feature>
<feature type="disulfide bond" evidence="1">
    <location>
        <begin position="91"/>
        <end position="225"/>
    </location>
</feature>
<feature type="disulfide bond" evidence="1">
    <location>
        <begin position="321"/>
        <end position="329"/>
    </location>
</feature>
<reference key="1">
    <citation type="submission" date="2005-09" db="EMBL/GenBank/DDBJ databases">
        <title>Annotation of the Aspergillus terreus NIH2624 genome.</title>
        <authorList>
            <person name="Birren B.W."/>
            <person name="Lander E.S."/>
            <person name="Galagan J.E."/>
            <person name="Nusbaum C."/>
            <person name="Devon K."/>
            <person name="Henn M."/>
            <person name="Ma L.-J."/>
            <person name="Jaffe D.B."/>
            <person name="Butler J."/>
            <person name="Alvarez P."/>
            <person name="Gnerre S."/>
            <person name="Grabherr M."/>
            <person name="Kleber M."/>
            <person name="Mauceli E.W."/>
            <person name="Brockman W."/>
            <person name="Rounsley S."/>
            <person name="Young S.K."/>
            <person name="LaButti K."/>
            <person name="Pushparaj V."/>
            <person name="DeCaprio D."/>
            <person name="Crawford M."/>
            <person name="Koehrsen M."/>
            <person name="Engels R."/>
            <person name="Montgomery P."/>
            <person name="Pearson M."/>
            <person name="Howarth C."/>
            <person name="Larson L."/>
            <person name="Luoma S."/>
            <person name="White J."/>
            <person name="Alvarado L."/>
            <person name="Kodira C.D."/>
            <person name="Zeng Q."/>
            <person name="Oleary S."/>
            <person name="Yandava C."/>
            <person name="Denning D.W."/>
            <person name="Nierman W.C."/>
            <person name="Milne T."/>
            <person name="Madden K."/>
        </authorList>
    </citation>
    <scope>NUCLEOTIDE SEQUENCE [LARGE SCALE GENOMIC DNA]</scope>
    <source>
        <strain>NIH 2624 / FGSC A1156</strain>
    </source>
</reference>
<protein>
    <recommendedName>
        <fullName>Probable pectin lyase A</fullName>
        <shortName>PLA</shortName>
        <ecNumber>4.2.2.10</ecNumber>
    </recommendedName>
</protein>
<gene>
    <name type="primary">pelA</name>
    <name type="ORF">ATEG_01216</name>
</gene>
<evidence type="ECO:0000250" key="1"/>
<evidence type="ECO:0000255" key="2"/>
<evidence type="ECO:0000305" key="3"/>